<sequence>MANPLYQKHIISINDLSRDDLNLVLATAAKLKANPQPELLKHKVIASCFFEASTRTRLSFETSMHRLGASVVGFSDSANTSLGKKGETLADTISVISTYVDAIVMRHPQEGAARLATEFSGQVPVLNAGDGSNQHPTQTLLDLFTIQETQGRLDNLHIAMVGDLKYGRTVHSLTQALAKFSGNRFYFIAPDALAMPQYILDMLDEKGMAWSPHGSIEEVMADVDILYMTRVQKERLDPSEYANVKAQFVLRASDLNGARENMKVLHPLPRIDEITTDVDKTPHAWYFQQAGNGIFARQALLALVLNSELSL</sequence>
<organism>
    <name type="scientific">Salmonella paratyphi C (strain RKS4594)</name>
    <dbReference type="NCBI Taxonomy" id="476213"/>
    <lineage>
        <taxon>Bacteria</taxon>
        <taxon>Pseudomonadati</taxon>
        <taxon>Pseudomonadota</taxon>
        <taxon>Gammaproteobacteria</taxon>
        <taxon>Enterobacterales</taxon>
        <taxon>Enterobacteriaceae</taxon>
        <taxon>Salmonella</taxon>
    </lineage>
</organism>
<reference key="1">
    <citation type="journal article" date="2009" name="PLoS ONE">
        <title>Salmonella paratyphi C: genetic divergence from Salmonella choleraesuis and pathogenic convergence with Salmonella typhi.</title>
        <authorList>
            <person name="Liu W.-Q."/>
            <person name="Feng Y."/>
            <person name="Wang Y."/>
            <person name="Zou Q.-H."/>
            <person name="Chen F."/>
            <person name="Guo J.-T."/>
            <person name="Peng Y.-H."/>
            <person name="Jin Y."/>
            <person name="Li Y.-G."/>
            <person name="Hu S.-N."/>
            <person name="Johnston R.N."/>
            <person name="Liu G.-R."/>
            <person name="Liu S.-L."/>
        </authorList>
    </citation>
    <scope>NUCLEOTIDE SEQUENCE [LARGE SCALE GENOMIC DNA]</scope>
    <source>
        <strain>RKS4594</strain>
    </source>
</reference>
<comment type="function">
    <text evidence="1">Catalyzes the condensation of carbamoyl phosphate and aspartate to form carbamoyl aspartate and inorganic phosphate, the committed step in the de novo pyrimidine nucleotide biosynthesis pathway.</text>
</comment>
<comment type="catalytic activity">
    <reaction evidence="1">
        <text>carbamoyl phosphate + L-aspartate = N-carbamoyl-L-aspartate + phosphate + H(+)</text>
        <dbReference type="Rhea" id="RHEA:20013"/>
        <dbReference type="ChEBI" id="CHEBI:15378"/>
        <dbReference type="ChEBI" id="CHEBI:29991"/>
        <dbReference type="ChEBI" id="CHEBI:32814"/>
        <dbReference type="ChEBI" id="CHEBI:43474"/>
        <dbReference type="ChEBI" id="CHEBI:58228"/>
        <dbReference type="EC" id="2.1.3.2"/>
    </reaction>
</comment>
<comment type="pathway">
    <text evidence="1">Pyrimidine metabolism; UMP biosynthesis via de novo pathway; (S)-dihydroorotate from bicarbonate: step 2/3.</text>
</comment>
<comment type="subunit">
    <text evidence="1">Heterododecamer (2C3:3R2) of six catalytic PyrB chains organized as two trimers (C3), and six regulatory PyrI chains organized as three dimers (R2).</text>
</comment>
<comment type="similarity">
    <text evidence="1">Belongs to the aspartate/ornithine carbamoyltransferase superfamily. ATCase family.</text>
</comment>
<feature type="chain" id="PRO_1000116156" description="Aspartate carbamoyltransferase catalytic subunit">
    <location>
        <begin position="1"/>
        <end position="311"/>
    </location>
</feature>
<feature type="binding site" evidence="1">
    <location>
        <position position="55"/>
    </location>
    <ligand>
        <name>carbamoyl phosphate</name>
        <dbReference type="ChEBI" id="CHEBI:58228"/>
    </ligand>
</feature>
<feature type="binding site" evidence="1">
    <location>
        <position position="56"/>
    </location>
    <ligand>
        <name>carbamoyl phosphate</name>
        <dbReference type="ChEBI" id="CHEBI:58228"/>
    </ligand>
</feature>
<feature type="binding site" evidence="1">
    <location>
        <position position="85"/>
    </location>
    <ligand>
        <name>L-aspartate</name>
        <dbReference type="ChEBI" id="CHEBI:29991"/>
    </ligand>
</feature>
<feature type="binding site" evidence="1">
    <location>
        <position position="106"/>
    </location>
    <ligand>
        <name>carbamoyl phosphate</name>
        <dbReference type="ChEBI" id="CHEBI:58228"/>
    </ligand>
</feature>
<feature type="binding site" evidence="1">
    <location>
        <position position="135"/>
    </location>
    <ligand>
        <name>carbamoyl phosphate</name>
        <dbReference type="ChEBI" id="CHEBI:58228"/>
    </ligand>
</feature>
<feature type="binding site" evidence="1">
    <location>
        <position position="138"/>
    </location>
    <ligand>
        <name>carbamoyl phosphate</name>
        <dbReference type="ChEBI" id="CHEBI:58228"/>
    </ligand>
</feature>
<feature type="binding site" evidence="1">
    <location>
        <position position="168"/>
    </location>
    <ligand>
        <name>L-aspartate</name>
        <dbReference type="ChEBI" id="CHEBI:29991"/>
    </ligand>
</feature>
<feature type="binding site" evidence="1">
    <location>
        <position position="230"/>
    </location>
    <ligand>
        <name>L-aspartate</name>
        <dbReference type="ChEBI" id="CHEBI:29991"/>
    </ligand>
</feature>
<feature type="binding site" evidence="1">
    <location>
        <position position="268"/>
    </location>
    <ligand>
        <name>carbamoyl phosphate</name>
        <dbReference type="ChEBI" id="CHEBI:58228"/>
    </ligand>
</feature>
<feature type="binding site" evidence="1">
    <location>
        <position position="269"/>
    </location>
    <ligand>
        <name>carbamoyl phosphate</name>
        <dbReference type="ChEBI" id="CHEBI:58228"/>
    </ligand>
</feature>
<protein>
    <recommendedName>
        <fullName evidence="1">Aspartate carbamoyltransferase catalytic subunit</fullName>
        <ecNumber evidence="1">2.1.3.2</ecNumber>
    </recommendedName>
    <alternativeName>
        <fullName evidence="1">Aspartate transcarbamylase</fullName>
        <shortName evidence="1">ATCase</shortName>
    </alternativeName>
</protein>
<accession>C0Q7B8</accession>
<keyword id="KW-0665">Pyrimidine biosynthesis</keyword>
<keyword id="KW-0808">Transferase</keyword>
<gene>
    <name evidence="1" type="primary">pyrB</name>
    <name type="ordered locus">SPC_4592</name>
</gene>
<proteinExistence type="inferred from homology"/>
<name>PYRB_SALPC</name>
<dbReference type="EC" id="2.1.3.2" evidence="1"/>
<dbReference type="EMBL" id="CP000857">
    <property type="protein sequence ID" value="ACN48641.1"/>
    <property type="molecule type" value="Genomic_DNA"/>
</dbReference>
<dbReference type="RefSeq" id="WP_000013057.1">
    <property type="nucleotide sequence ID" value="NC_012125.1"/>
</dbReference>
<dbReference type="SMR" id="C0Q7B8"/>
<dbReference type="KEGG" id="sei:SPC_4592"/>
<dbReference type="HOGENOM" id="CLU_043846_1_2_6"/>
<dbReference type="UniPathway" id="UPA00070">
    <property type="reaction ID" value="UER00116"/>
</dbReference>
<dbReference type="Proteomes" id="UP000001599">
    <property type="component" value="Chromosome"/>
</dbReference>
<dbReference type="GO" id="GO:0005829">
    <property type="term" value="C:cytosol"/>
    <property type="evidence" value="ECO:0007669"/>
    <property type="project" value="TreeGrafter"/>
</dbReference>
<dbReference type="GO" id="GO:0016597">
    <property type="term" value="F:amino acid binding"/>
    <property type="evidence" value="ECO:0007669"/>
    <property type="project" value="InterPro"/>
</dbReference>
<dbReference type="GO" id="GO:0004070">
    <property type="term" value="F:aspartate carbamoyltransferase activity"/>
    <property type="evidence" value="ECO:0007669"/>
    <property type="project" value="UniProtKB-UniRule"/>
</dbReference>
<dbReference type="GO" id="GO:0006207">
    <property type="term" value="P:'de novo' pyrimidine nucleobase biosynthetic process"/>
    <property type="evidence" value="ECO:0007669"/>
    <property type="project" value="InterPro"/>
</dbReference>
<dbReference type="GO" id="GO:0044205">
    <property type="term" value="P:'de novo' UMP biosynthetic process"/>
    <property type="evidence" value="ECO:0007669"/>
    <property type="project" value="UniProtKB-UniRule"/>
</dbReference>
<dbReference type="GO" id="GO:0006520">
    <property type="term" value="P:amino acid metabolic process"/>
    <property type="evidence" value="ECO:0007669"/>
    <property type="project" value="InterPro"/>
</dbReference>
<dbReference type="FunFam" id="3.40.50.1370:FF:000001">
    <property type="entry name" value="Aspartate carbamoyltransferase"/>
    <property type="match status" value="1"/>
</dbReference>
<dbReference type="FunFam" id="3.40.50.1370:FF:000002">
    <property type="entry name" value="Aspartate carbamoyltransferase 2"/>
    <property type="match status" value="1"/>
</dbReference>
<dbReference type="Gene3D" id="3.40.50.1370">
    <property type="entry name" value="Aspartate/ornithine carbamoyltransferase"/>
    <property type="match status" value="2"/>
</dbReference>
<dbReference type="HAMAP" id="MF_00001">
    <property type="entry name" value="Asp_carb_tr"/>
    <property type="match status" value="1"/>
</dbReference>
<dbReference type="InterPro" id="IPR006132">
    <property type="entry name" value="Asp/Orn_carbamoyltranf_P-bd"/>
</dbReference>
<dbReference type="InterPro" id="IPR006130">
    <property type="entry name" value="Asp/Orn_carbamoylTrfase"/>
</dbReference>
<dbReference type="InterPro" id="IPR036901">
    <property type="entry name" value="Asp/Orn_carbamoylTrfase_sf"/>
</dbReference>
<dbReference type="InterPro" id="IPR002082">
    <property type="entry name" value="Asp_carbamoyltransf"/>
</dbReference>
<dbReference type="InterPro" id="IPR006131">
    <property type="entry name" value="Asp_carbamoyltransf_Asp/Orn-bd"/>
</dbReference>
<dbReference type="NCBIfam" id="TIGR00670">
    <property type="entry name" value="asp_carb_tr"/>
    <property type="match status" value="1"/>
</dbReference>
<dbReference type="NCBIfam" id="NF002032">
    <property type="entry name" value="PRK00856.1"/>
    <property type="match status" value="1"/>
</dbReference>
<dbReference type="PANTHER" id="PTHR45753:SF6">
    <property type="entry name" value="ASPARTATE CARBAMOYLTRANSFERASE"/>
    <property type="match status" value="1"/>
</dbReference>
<dbReference type="PANTHER" id="PTHR45753">
    <property type="entry name" value="ORNITHINE CARBAMOYLTRANSFERASE, MITOCHONDRIAL"/>
    <property type="match status" value="1"/>
</dbReference>
<dbReference type="Pfam" id="PF00185">
    <property type="entry name" value="OTCace"/>
    <property type="match status" value="1"/>
</dbReference>
<dbReference type="Pfam" id="PF02729">
    <property type="entry name" value="OTCace_N"/>
    <property type="match status" value="1"/>
</dbReference>
<dbReference type="PRINTS" id="PR00100">
    <property type="entry name" value="AOTCASE"/>
</dbReference>
<dbReference type="PRINTS" id="PR00101">
    <property type="entry name" value="ATCASE"/>
</dbReference>
<dbReference type="SUPFAM" id="SSF53671">
    <property type="entry name" value="Aspartate/ornithine carbamoyltransferase"/>
    <property type="match status" value="1"/>
</dbReference>
<dbReference type="PROSITE" id="PS00097">
    <property type="entry name" value="CARBAMOYLTRANSFERASE"/>
    <property type="match status" value="1"/>
</dbReference>
<evidence type="ECO:0000255" key="1">
    <source>
        <dbReference type="HAMAP-Rule" id="MF_00001"/>
    </source>
</evidence>